<sequence>MATKASNLVVFLLSLLLLFLLISFQVGVADATRNKRQGQEQRVDYDYPRPPTAPIYLPPSKSRKGKGP</sequence>
<keyword id="KW-0052">Apoplast</keyword>
<keyword id="KW-1003">Cell membrane</keyword>
<keyword id="KW-0165">Cleavage on pair of basic residues</keyword>
<keyword id="KW-0472">Membrane</keyword>
<keyword id="KW-1185">Reference proteome</keyword>
<keyword id="KW-0964">Secreted</keyword>
<keyword id="KW-0732">Signal</keyword>
<reference key="1">
    <citation type="journal article" date="2000" name="Nature">
        <title>Sequence and analysis of chromosome 1 of the plant Arabidopsis thaliana.</title>
        <authorList>
            <person name="Theologis A."/>
            <person name="Ecker J.R."/>
            <person name="Palm C.J."/>
            <person name="Federspiel N.A."/>
            <person name="Kaul S."/>
            <person name="White O."/>
            <person name="Alonso J."/>
            <person name="Altafi H."/>
            <person name="Araujo R."/>
            <person name="Bowman C.L."/>
            <person name="Brooks S.Y."/>
            <person name="Buehler E."/>
            <person name="Chan A."/>
            <person name="Chao Q."/>
            <person name="Chen H."/>
            <person name="Cheuk R.F."/>
            <person name="Chin C.W."/>
            <person name="Chung M.K."/>
            <person name="Conn L."/>
            <person name="Conway A.B."/>
            <person name="Conway A.R."/>
            <person name="Creasy T.H."/>
            <person name="Dewar K."/>
            <person name="Dunn P."/>
            <person name="Etgu P."/>
            <person name="Feldblyum T.V."/>
            <person name="Feng J.-D."/>
            <person name="Fong B."/>
            <person name="Fujii C.Y."/>
            <person name="Gill J.E."/>
            <person name="Goldsmith A.D."/>
            <person name="Haas B."/>
            <person name="Hansen N.F."/>
            <person name="Hughes B."/>
            <person name="Huizar L."/>
            <person name="Hunter J.L."/>
            <person name="Jenkins J."/>
            <person name="Johnson-Hopson C."/>
            <person name="Khan S."/>
            <person name="Khaykin E."/>
            <person name="Kim C.J."/>
            <person name="Koo H.L."/>
            <person name="Kremenetskaia I."/>
            <person name="Kurtz D.B."/>
            <person name="Kwan A."/>
            <person name="Lam B."/>
            <person name="Langin-Hooper S."/>
            <person name="Lee A."/>
            <person name="Lee J.M."/>
            <person name="Lenz C.A."/>
            <person name="Li J.H."/>
            <person name="Li Y.-P."/>
            <person name="Lin X."/>
            <person name="Liu S.X."/>
            <person name="Liu Z.A."/>
            <person name="Luros J.S."/>
            <person name="Maiti R."/>
            <person name="Marziali A."/>
            <person name="Militscher J."/>
            <person name="Miranda M."/>
            <person name="Nguyen M."/>
            <person name="Nierman W.C."/>
            <person name="Osborne B.I."/>
            <person name="Pai G."/>
            <person name="Peterson J."/>
            <person name="Pham P.K."/>
            <person name="Rizzo M."/>
            <person name="Rooney T."/>
            <person name="Rowley D."/>
            <person name="Sakano H."/>
            <person name="Salzberg S.L."/>
            <person name="Schwartz J.R."/>
            <person name="Shinn P."/>
            <person name="Southwick A.M."/>
            <person name="Sun H."/>
            <person name="Tallon L.J."/>
            <person name="Tambunga G."/>
            <person name="Toriumi M.J."/>
            <person name="Town C.D."/>
            <person name="Utterback T."/>
            <person name="Van Aken S."/>
            <person name="Vaysberg M."/>
            <person name="Vysotskaia V.S."/>
            <person name="Walker M."/>
            <person name="Wu D."/>
            <person name="Yu G."/>
            <person name="Fraser C.M."/>
            <person name="Venter J.C."/>
            <person name="Davis R.W."/>
        </authorList>
    </citation>
    <scope>NUCLEOTIDE SEQUENCE [LARGE SCALE GENOMIC DNA]</scope>
    <source>
        <strain>cv. Columbia</strain>
    </source>
</reference>
<reference key="2">
    <citation type="journal article" date="2017" name="Plant J.">
        <title>Araport11: a complete reannotation of the Arabidopsis thaliana reference genome.</title>
        <authorList>
            <person name="Cheng C.Y."/>
            <person name="Krishnakumar V."/>
            <person name="Chan A.P."/>
            <person name="Thibaud-Nissen F."/>
            <person name="Schobel S."/>
            <person name="Town C.D."/>
        </authorList>
    </citation>
    <scope>GENOME REANNOTATION</scope>
    <source>
        <strain>cv. Columbia</strain>
    </source>
</reference>
<reference key="3">
    <citation type="submission" date="2006-06" db="EMBL/GenBank/DDBJ databases">
        <title>Arabidopsis ORF clones.</title>
        <authorList>
            <person name="Shinn P."/>
            <person name="Chen H."/>
            <person name="Kim C.J."/>
            <person name="Quinitio C."/>
            <person name="Ecker J.R."/>
        </authorList>
    </citation>
    <scope>NUCLEOTIDE SEQUENCE [LARGE SCALE MRNA]</scope>
    <source>
        <strain>cv. Columbia</strain>
    </source>
</reference>
<reference key="4">
    <citation type="submission" date="2006-07" db="EMBL/GenBank/DDBJ databases">
        <title>Large-scale analysis of RIKEN Arabidopsis full-length (RAFL) cDNAs.</title>
        <authorList>
            <person name="Totoki Y."/>
            <person name="Seki M."/>
            <person name="Ishida J."/>
            <person name="Nakajima M."/>
            <person name="Enju A."/>
            <person name="Kamiya A."/>
            <person name="Narusaka M."/>
            <person name="Shin-i T."/>
            <person name="Nakagawa M."/>
            <person name="Sakamoto N."/>
            <person name="Oishi K."/>
            <person name="Kohara Y."/>
            <person name="Kobayashi M."/>
            <person name="Toyoda A."/>
            <person name="Sakaki Y."/>
            <person name="Sakurai T."/>
            <person name="Iida K."/>
            <person name="Akiyama K."/>
            <person name="Satou M."/>
            <person name="Toyoda T."/>
            <person name="Konagaya A."/>
            <person name="Carninci P."/>
            <person name="Kawai J."/>
            <person name="Hayashizaki Y."/>
            <person name="Shinozaki K."/>
        </authorList>
    </citation>
    <scope>NUCLEOTIDE SEQUENCE [LARGE SCALE MRNA]</scope>
    <source>
        <strain>cv. Columbia</strain>
    </source>
</reference>
<reference key="5">
    <citation type="submission" date="2002-03" db="EMBL/GenBank/DDBJ databases">
        <title>Full-length cDNA from Arabidopsis thaliana.</title>
        <authorList>
            <person name="Brover V.V."/>
            <person name="Troukhan M.E."/>
            <person name="Alexandrov N.A."/>
            <person name="Lu Y.-P."/>
            <person name="Flavell R.B."/>
            <person name="Feldmann K.A."/>
        </authorList>
    </citation>
    <scope>NUCLEOTIDE SEQUENCE [LARGE SCALE MRNA]</scope>
</reference>
<reference key="6">
    <citation type="journal article" date="2019" name="J. Exp. Bot.">
        <title>The SCOOP12 peptide regulates defense response and root elongation in Arabidopsis thaliana.</title>
        <authorList>
            <person name="Gully K."/>
            <person name="Pelletier S."/>
            <person name="Guillou M.-C."/>
            <person name="Ferrand M."/>
            <person name="Aligon S."/>
            <person name="Pokotylo I."/>
            <person name="Perrin A."/>
            <person name="Vergne E."/>
            <person name="Fagard M."/>
            <person name="Ruelland E."/>
            <person name="Grappin P."/>
            <person name="Bucher E."/>
            <person name="Renou J.-P."/>
            <person name="Aubourg S."/>
        </authorList>
    </citation>
    <scope>GENE FAMILY</scope>
    <source>
        <strain>cv. Columbia</strain>
        <strain>cv. Wassilewskija</strain>
    </source>
</reference>
<reference key="7">
    <citation type="journal article" date="2020" name="J. Integr. Plant Biol.">
        <title>The Brassicaceae-specific secreted peptides, STMPs, function in plant growth and pathogen defense.</title>
        <authorList>
            <person name="Yu Z."/>
            <person name="Xu Y."/>
            <person name="Zhu L."/>
            <person name="Zhang L."/>
            <person name="Liu L."/>
            <person name="Zhang D."/>
            <person name="Li D."/>
            <person name="Wu C."/>
            <person name="Huang J."/>
            <person name="Yang G."/>
            <person name="Yan K."/>
            <person name="Zhang S."/>
            <person name="Zheng C."/>
        </authorList>
    </citation>
    <scope>FUNCTION</scope>
    <scope>DISRUPTION PHENOTYPE</scope>
    <scope>SUBCELLULAR LOCATION</scope>
    <scope>TISSUE SPECIFICITY</scope>
    <scope>INDUCTION BY BIOTIC AND ABIOTIC STRESSES</scope>
    <scope>GENE FAMILY</scope>
    <scope>NOMENCLATURE</scope>
    <source>
        <strain>cv. Columbia</strain>
    </source>
</reference>
<reference key="8">
    <citation type="journal article" date="2021" name="Nat. Commun.">
        <title>Perception of a divergent family of phytocytokines by the Arabidopsis receptor kinase MIK2.</title>
        <authorList>
            <person name="Rhodes J."/>
            <person name="Yang H."/>
            <person name="Moussu S."/>
            <person name="Boutrot F."/>
            <person name="Santiago J."/>
            <person name="Zipfel C."/>
        </authorList>
    </citation>
    <scope>FUNCTION</scope>
    <scope>GENE FAMILY</scope>
    <source>
        <strain>cv. Columbia</strain>
        <strain>cv. Wassilewskija-2</strain>
    </source>
</reference>
<reference key="9">
    <citation type="journal article" date="2021" name="Nat. Commun.">
        <title>The Arabidopsis MIK2 receptor elicits immunity by sensing a conserved signature from phytocytokines and microbes.</title>
        <authorList>
            <person name="Hou S."/>
            <person name="Liu D."/>
            <person name="Huang S."/>
            <person name="Luo D."/>
            <person name="Liu Z."/>
            <person name="Xiang Q."/>
            <person name="Wang P."/>
            <person name="Mu R."/>
            <person name="Han Z."/>
            <person name="Chen S."/>
            <person name="Chai J."/>
            <person name="Shan L."/>
            <person name="He P."/>
        </authorList>
    </citation>
    <scope>FUNCTION</scope>
    <scope>TISSUE SPECIFICITY</scope>
    <scope>GENE FAMILY</scope>
    <scope>NOMENCLATURE</scope>
    <source>
        <strain>cv. Columbia</strain>
    </source>
</reference>
<dbReference type="EMBL" id="AF000657">
    <property type="status" value="NOT_ANNOTATED_CDS"/>
    <property type="molecule type" value="Genomic_DNA"/>
</dbReference>
<dbReference type="EMBL" id="CP002684">
    <property type="protein sequence ID" value="AEE30302.1"/>
    <property type="molecule type" value="Genomic_DNA"/>
</dbReference>
<dbReference type="EMBL" id="BT025637">
    <property type="protein sequence ID" value="ABF74698.1"/>
    <property type="molecule type" value="mRNA"/>
</dbReference>
<dbReference type="EMBL" id="AK230409">
    <property type="protein sequence ID" value="BAF02207.1"/>
    <property type="molecule type" value="mRNA"/>
</dbReference>
<dbReference type="EMBL" id="AY085693">
    <property type="protein sequence ID" value="AAM62912.1"/>
    <property type="molecule type" value="mRNA"/>
</dbReference>
<dbReference type="RefSeq" id="NP_564183.1">
    <property type="nucleotide sequence ID" value="NM_102135.2"/>
</dbReference>
<dbReference type="SMR" id="Q8LE06"/>
<dbReference type="EnsemblPlants" id="AT1G22885.1">
    <property type="protein sequence ID" value="AT1G22885.1"/>
    <property type="gene ID" value="AT1G22885"/>
</dbReference>
<dbReference type="GeneID" id="838895"/>
<dbReference type="Gramene" id="AT1G22885.1">
    <property type="protein sequence ID" value="AT1G22885.1"/>
    <property type="gene ID" value="AT1G22885"/>
</dbReference>
<dbReference type="KEGG" id="ath:AT1G22885"/>
<dbReference type="Araport" id="AT1G22885"/>
<dbReference type="TAIR" id="AT1G22885"/>
<dbReference type="HOGENOM" id="CLU_200719_0_0_1"/>
<dbReference type="OMA" id="RNKRQGQ"/>
<dbReference type="OrthoDB" id="1103305at2759"/>
<dbReference type="PRO" id="PR:Q8LE06"/>
<dbReference type="Proteomes" id="UP000006548">
    <property type="component" value="Chromosome 1"/>
</dbReference>
<dbReference type="ExpressionAtlas" id="Q8LE06">
    <property type="expression patterns" value="baseline and differential"/>
</dbReference>
<dbReference type="GO" id="GO:0048046">
    <property type="term" value="C:apoplast"/>
    <property type="evidence" value="ECO:0000314"/>
    <property type="project" value="UniProtKB"/>
</dbReference>
<dbReference type="GO" id="GO:0005886">
    <property type="term" value="C:plasma membrane"/>
    <property type="evidence" value="ECO:0007669"/>
    <property type="project" value="UniProtKB-SubCell"/>
</dbReference>
<dbReference type="GO" id="GO:0030275">
    <property type="term" value="F:LRR domain binding"/>
    <property type="evidence" value="ECO:0000250"/>
    <property type="project" value="UniProtKB"/>
</dbReference>
<dbReference type="GO" id="GO:0033612">
    <property type="term" value="F:receptor serine/threonine kinase binding"/>
    <property type="evidence" value="ECO:0000250"/>
    <property type="project" value="UniProtKB"/>
</dbReference>
<dbReference type="GO" id="GO:0042742">
    <property type="term" value="P:defense response to bacterium"/>
    <property type="evidence" value="ECO:0000314"/>
    <property type="project" value="UniProtKB"/>
</dbReference>
<dbReference type="GO" id="GO:0009617">
    <property type="term" value="P:response to bacterium"/>
    <property type="evidence" value="ECO:0000270"/>
    <property type="project" value="UniProtKB"/>
</dbReference>
<dbReference type="GO" id="GO:0009409">
    <property type="term" value="P:response to cold"/>
    <property type="evidence" value="ECO:0000270"/>
    <property type="project" value="UniProtKB"/>
</dbReference>
<dbReference type="GO" id="GO:0009723">
    <property type="term" value="P:response to ethylene"/>
    <property type="evidence" value="ECO:0000270"/>
    <property type="project" value="UniProtKB"/>
</dbReference>
<dbReference type="GO" id="GO:0009753">
    <property type="term" value="P:response to jasmonic acid"/>
    <property type="evidence" value="ECO:0000270"/>
    <property type="project" value="UniProtKB"/>
</dbReference>
<dbReference type="GO" id="GO:0009751">
    <property type="term" value="P:response to salicylic acid"/>
    <property type="evidence" value="ECO:0000270"/>
    <property type="project" value="UniProtKB"/>
</dbReference>
<dbReference type="GO" id="GO:0009651">
    <property type="term" value="P:response to salt stress"/>
    <property type="evidence" value="ECO:0000270"/>
    <property type="project" value="UniProtKB"/>
</dbReference>
<dbReference type="GO" id="GO:0009414">
    <property type="term" value="P:response to water deprivation"/>
    <property type="evidence" value="ECO:0000270"/>
    <property type="project" value="UniProtKB"/>
</dbReference>
<gene>
    <name evidence="8 9" type="primary">PROSCOOP13</name>
    <name evidence="8 9" type="synonym">SCOOP13</name>
    <name evidence="7" type="synonym">STMP1</name>
    <name evidence="12" type="ordered locus">At1g22885</name>
    <name evidence="13" type="ORF">F19G10</name>
</gene>
<proteinExistence type="evidence at transcript level"/>
<organism>
    <name type="scientific">Arabidopsis thaliana</name>
    <name type="common">Mouse-ear cress</name>
    <dbReference type="NCBI Taxonomy" id="3702"/>
    <lineage>
        <taxon>Eukaryota</taxon>
        <taxon>Viridiplantae</taxon>
        <taxon>Streptophyta</taxon>
        <taxon>Embryophyta</taxon>
        <taxon>Tracheophyta</taxon>
        <taxon>Spermatophyta</taxon>
        <taxon>Magnoliopsida</taxon>
        <taxon>eudicotyledons</taxon>
        <taxon>Gunneridae</taxon>
        <taxon>Pentapetalae</taxon>
        <taxon>rosids</taxon>
        <taxon>malvids</taxon>
        <taxon>Brassicales</taxon>
        <taxon>Brassicaceae</taxon>
        <taxon>Camelineae</taxon>
        <taxon>Arabidopsis</taxon>
    </lineage>
</organism>
<accession>Q8LE06</accession>
<protein>
    <recommendedName>
        <fullName evidence="8 9">Serine rich endogenous peptide 13</fullName>
        <shortName evidence="8 9">AtSCOOP13</shortName>
    </recommendedName>
    <alternativeName>
        <fullName evidence="8 9">Phytocytokine SCOOP13</fullName>
    </alternativeName>
    <alternativeName>
        <fullName evidence="8 9">Precursor of serine rich endogenous peptide phytocytokine 13</fullName>
    </alternativeName>
    <alternativeName>
        <fullName evidence="7">Secreted transmembrane peptide 1</fullName>
    </alternativeName>
</protein>
<name>SOP13_ARATH</name>
<feature type="signal peptide" evidence="2">
    <location>
        <begin position="1"/>
        <end position="31"/>
    </location>
</feature>
<feature type="propeptide" id="PRO_0000457238" description="Removed in mature form" evidence="1">
    <location>
        <begin position="32"/>
        <end status="unknown"/>
    </location>
</feature>
<feature type="peptide" id="PRO_0000457239" description="Serine rich endogenous peptide 13" evidence="1">
    <location>
        <begin status="unknown"/>
        <end position="68"/>
    </location>
</feature>
<feature type="region of interest" description="Disordered" evidence="3">
    <location>
        <begin position="33"/>
        <end position="68"/>
    </location>
</feature>
<feature type="short sequence motif" description="SCOOP motif" evidence="11">
    <location>
        <begin position="54"/>
        <end position="68"/>
    </location>
</feature>
<feature type="short sequence motif" description="SxS motif essential for MIK2 binding" evidence="1">
    <location>
        <begin position="60"/>
        <end position="62"/>
    </location>
</feature>
<feature type="compositionally biased region" description="Basic and acidic residues" evidence="3">
    <location>
        <begin position="37"/>
        <end position="47"/>
    </location>
</feature>
<feature type="compositionally biased region" description="Pro residues" evidence="3">
    <location>
        <begin position="48"/>
        <end position="57"/>
    </location>
</feature>
<evidence type="ECO:0000250" key="1">
    <source>
        <dbReference type="UniProtKB" id="B3H7I1"/>
    </source>
</evidence>
<evidence type="ECO:0000255" key="2"/>
<evidence type="ECO:0000256" key="3">
    <source>
        <dbReference type="SAM" id="MobiDB-lite"/>
    </source>
</evidence>
<evidence type="ECO:0000269" key="4">
    <source>
    </source>
</evidence>
<evidence type="ECO:0000269" key="5">
    <source>
    </source>
</evidence>
<evidence type="ECO:0000269" key="6">
    <source>
    </source>
</evidence>
<evidence type="ECO:0000303" key="7">
    <source>
    </source>
</evidence>
<evidence type="ECO:0000303" key="8">
    <source>
    </source>
</evidence>
<evidence type="ECO:0000303" key="9">
    <source>
    </source>
</evidence>
<evidence type="ECO:0000305" key="10"/>
<evidence type="ECO:0000305" key="11">
    <source>
    </source>
</evidence>
<evidence type="ECO:0000312" key="12">
    <source>
        <dbReference type="Araport" id="AT1G22885"/>
    </source>
</evidence>
<evidence type="ECO:0000312" key="13">
    <source>
        <dbReference type="EMBL" id="AF000657"/>
    </source>
</evidence>
<comment type="function">
    <text evidence="4 5 6">Brassicaceae-specific phytocytokine (plant endogenous peptide released into the apoplast) perceived by MIK2 in a BAK1/SERK3 and SERK4 coreceptors-dependent manner, that modulates various physiological and antimicrobial processes including growth prevention and reactive oxygen species (ROS) response regulation (PubMed:31001913, PubMed:33514716, PubMed:34535661). Promotes the expression of immune-related marker genes (e.g. WRKY30, WRKY33 and CYP81F2) in a MIK2-dependent manner (PubMed:34535661). Inhibits root growth and regulates root meristems (PubMed:31001913, PubMed:34535661). Prevents general growth and development (PubMed:31001913). Exhibits antibacterial effects against Pseudomonas syringae pv. tomato DC3000, Ralstonia solanacearum, Bacillus subtilis and Agrobacterium tumefaciens, thus being an antimicrobial peptide (AMP) (PubMed:31001913).</text>
</comment>
<comment type="subunit">
    <text evidence="1">Interacts with MIK2 (via extracellular leucine-rich repeat domain); this interaction triggers the formation of complex between MIK2 and the BAK1/SERK3 and SERK4 coreceptors, and subsequent BAK1 activation by phosphorylation.</text>
</comment>
<comment type="subcellular location">
    <subcellularLocation>
        <location evidence="4">Cell membrane</location>
    </subcellularLocation>
    <subcellularLocation>
        <location evidence="4">Secreted</location>
        <location evidence="4">Extracellular space</location>
        <location evidence="4">Apoplast</location>
    </subcellularLocation>
    <text evidence="4">The precursor of SCOOP13, PROSCOOP13, accumulates at the plasma membrane and is proteolytically cleaved to release the SCOOP13 in the apoplasm.</text>
</comment>
<comment type="tissue specificity">
    <text evidence="4 6">Mostly expressed in stems and flowers and, to a lower extent, in seedlings shoots, roots, siliques, seeds and leaves.</text>
</comment>
<comment type="induction">
    <text evidence="4">Induced by cold, drought and salt stress, but repressed by pathogenic bacteria Pseudomonas syringae pv. tomato (Pst) DC3000, jasmonate (MeJA), ethylene (ET) and salicylic acid (SA), mainly in shoots.</text>
</comment>
<comment type="disruption phenotype">
    <text evidence="4">Slightly increased growth and fresh weight.</text>
</comment>
<comment type="similarity">
    <text evidence="10">Belongs to the serine rich endogenous peptide (SCOOP) phytocytokine family.</text>
</comment>